<sequence>MIDFDGYRPNVGIVICNRKGQVLWAKRCGQNSWQFPQGGINDNESAEQAMYRELHEEVGLQPKDVRLLYVSKHWLRYKLPKRLLRYDSKPMCIGQKQRWFLLQLVGDEKNINMKTTKSPEFDGWRWVSFWYPVRQVVSFKRDVYRKVMKEFASVLFTDNPPIFSASREANSQSNSANKKYSQTKYTKRHFYKSKGQ</sequence>
<feature type="chain" id="PRO_0000231910" description="RNA pyrophosphohydrolase">
    <location>
        <begin position="1"/>
        <end position="196"/>
    </location>
</feature>
<feature type="domain" description="Nudix hydrolase" evidence="1">
    <location>
        <begin position="6"/>
        <end position="149"/>
    </location>
</feature>
<feature type="region of interest" description="Disordered" evidence="2">
    <location>
        <begin position="166"/>
        <end position="196"/>
    </location>
</feature>
<feature type="short sequence motif" description="Nudix box">
    <location>
        <begin position="38"/>
        <end position="59"/>
    </location>
</feature>
<feature type="compositionally biased region" description="Polar residues" evidence="2">
    <location>
        <begin position="167"/>
        <end position="184"/>
    </location>
</feature>
<feature type="compositionally biased region" description="Basic residues" evidence="2">
    <location>
        <begin position="185"/>
        <end position="196"/>
    </location>
</feature>
<evidence type="ECO:0000255" key="1">
    <source>
        <dbReference type="HAMAP-Rule" id="MF_00298"/>
    </source>
</evidence>
<evidence type="ECO:0000256" key="2">
    <source>
        <dbReference type="SAM" id="MobiDB-lite"/>
    </source>
</evidence>
<accession>Q4QM07</accession>
<reference key="1">
    <citation type="journal article" date="2005" name="J. Bacteriol.">
        <title>Genomic sequence of an otitis media isolate of nontypeable Haemophilus influenzae: comparative study with H. influenzae serotype d, strain KW20.</title>
        <authorList>
            <person name="Harrison A."/>
            <person name="Dyer D.W."/>
            <person name="Gillaspy A."/>
            <person name="Ray W.C."/>
            <person name="Mungur R."/>
            <person name="Carson M.B."/>
            <person name="Zhong H."/>
            <person name="Gipson J."/>
            <person name="Gipson M."/>
            <person name="Johnson L.S."/>
            <person name="Lewis L."/>
            <person name="Bakaletz L.O."/>
            <person name="Munson R.S. Jr."/>
        </authorList>
    </citation>
    <scope>NUCLEOTIDE SEQUENCE [LARGE SCALE GENOMIC DNA]</scope>
    <source>
        <strain>86-028NP</strain>
    </source>
</reference>
<protein>
    <recommendedName>
        <fullName evidence="1">RNA pyrophosphohydrolase</fullName>
        <ecNumber evidence="1">3.6.1.-</ecNumber>
    </recommendedName>
    <alternativeName>
        <fullName evidence="1">(Di)nucleoside polyphosphate hydrolase</fullName>
    </alternativeName>
</protein>
<proteinExistence type="inferred from homology"/>
<keyword id="KW-0378">Hydrolase</keyword>
<name>RPPH_HAEI8</name>
<organism>
    <name type="scientific">Haemophilus influenzae (strain 86-028NP)</name>
    <dbReference type="NCBI Taxonomy" id="281310"/>
    <lineage>
        <taxon>Bacteria</taxon>
        <taxon>Pseudomonadati</taxon>
        <taxon>Pseudomonadota</taxon>
        <taxon>Gammaproteobacteria</taxon>
        <taxon>Pasteurellales</taxon>
        <taxon>Pasteurellaceae</taxon>
        <taxon>Haemophilus</taxon>
    </lineage>
</organism>
<comment type="function">
    <text evidence="1">Accelerates the degradation of transcripts by removing pyrophosphate from the 5'-end of triphosphorylated RNA, leading to a more labile monophosphorylated state that can stimulate subsequent ribonuclease cleavage.</text>
</comment>
<comment type="cofactor">
    <cofactor evidence="1">
        <name>a divalent metal cation</name>
        <dbReference type="ChEBI" id="CHEBI:60240"/>
    </cofactor>
</comment>
<comment type="similarity">
    <text evidence="1">Belongs to the Nudix hydrolase family. RppH subfamily.</text>
</comment>
<dbReference type="EC" id="3.6.1.-" evidence="1"/>
<dbReference type="EMBL" id="CP000057">
    <property type="protein sequence ID" value="AAX87940.1"/>
    <property type="molecule type" value="Genomic_DNA"/>
</dbReference>
<dbReference type="RefSeq" id="WP_011272276.1">
    <property type="nucleotide sequence ID" value="NC_007146.2"/>
</dbReference>
<dbReference type="SMR" id="Q4QM07"/>
<dbReference type="KEGG" id="hit:NTHI1068"/>
<dbReference type="HOGENOM" id="CLU_087195_3_2_6"/>
<dbReference type="Proteomes" id="UP000002525">
    <property type="component" value="Chromosome"/>
</dbReference>
<dbReference type="GO" id="GO:0005737">
    <property type="term" value="C:cytoplasm"/>
    <property type="evidence" value="ECO:0007669"/>
    <property type="project" value="TreeGrafter"/>
</dbReference>
<dbReference type="GO" id="GO:0034353">
    <property type="term" value="F:mRNA 5'-diphosphatase activity"/>
    <property type="evidence" value="ECO:0007669"/>
    <property type="project" value="TreeGrafter"/>
</dbReference>
<dbReference type="GO" id="GO:0006402">
    <property type="term" value="P:mRNA catabolic process"/>
    <property type="evidence" value="ECO:0007669"/>
    <property type="project" value="TreeGrafter"/>
</dbReference>
<dbReference type="CDD" id="cd03671">
    <property type="entry name" value="NUDIX_Ap4A_hydrolase_plant_like"/>
    <property type="match status" value="1"/>
</dbReference>
<dbReference type="FunFam" id="3.90.79.10:FF:000001">
    <property type="entry name" value="RNA pyrophosphohydrolase"/>
    <property type="match status" value="1"/>
</dbReference>
<dbReference type="Gene3D" id="3.90.79.10">
    <property type="entry name" value="Nucleoside Triphosphate Pyrophosphohydrolase"/>
    <property type="match status" value="1"/>
</dbReference>
<dbReference type="HAMAP" id="MF_00298">
    <property type="entry name" value="Nudix_RppH"/>
    <property type="match status" value="1"/>
</dbReference>
<dbReference type="InterPro" id="IPR020476">
    <property type="entry name" value="Nudix_hydrolase"/>
</dbReference>
<dbReference type="InterPro" id="IPR015797">
    <property type="entry name" value="NUDIX_hydrolase-like_dom_sf"/>
</dbReference>
<dbReference type="InterPro" id="IPR020084">
    <property type="entry name" value="NUDIX_hydrolase_CS"/>
</dbReference>
<dbReference type="InterPro" id="IPR000086">
    <property type="entry name" value="NUDIX_hydrolase_dom"/>
</dbReference>
<dbReference type="InterPro" id="IPR022927">
    <property type="entry name" value="RppH"/>
</dbReference>
<dbReference type="NCBIfam" id="NF001934">
    <property type="entry name" value="PRK00714.1-1"/>
    <property type="match status" value="1"/>
</dbReference>
<dbReference type="NCBIfam" id="NF001937">
    <property type="entry name" value="PRK00714.1-4"/>
    <property type="match status" value="1"/>
</dbReference>
<dbReference type="NCBIfam" id="NF001938">
    <property type="entry name" value="PRK00714.1-5"/>
    <property type="match status" value="1"/>
</dbReference>
<dbReference type="PANTHER" id="PTHR23114">
    <property type="entry name" value="M7GPPPN-MRNA HYDROLASE"/>
    <property type="match status" value="1"/>
</dbReference>
<dbReference type="PANTHER" id="PTHR23114:SF17">
    <property type="entry name" value="M7GPPPN-MRNA HYDROLASE"/>
    <property type="match status" value="1"/>
</dbReference>
<dbReference type="Pfam" id="PF00293">
    <property type="entry name" value="NUDIX"/>
    <property type="match status" value="1"/>
</dbReference>
<dbReference type="PRINTS" id="PR00502">
    <property type="entry name" value="NUDIXFAMILY"/>
</dbReference>
<dbReference type="SUPFAM" id="SSF55811">
    <property type="entry name" value="Nudix"/>
    <property type="match status" value="1"/>
</dbReference>
<dbReference type="PROSITE" id="PS51462">
    <property type="entry name" value="NUDIX"/>
    <property type="match status" value="1"/>
</dbReference>
<dbReference type="PROSITE" id="PS00893">
    <property type="entry name" value="NUDIX_BOX"/>
    <property type="match status" value="1"/>
</dbReference>
<gene>
    <name evidence="1" type="primary">rppH</name>
    <name evidence="1" type="synonym">nudH</name>
    <name type="ordered locus">NTHI1068</name>
</gene>